<sequence>MATIHVDGKEYEVNGADNLLEACLSLGLDIPYFCWHPALGSVGACRQCAVKQYQNAEDTRGRLVMSCMTPASDGTFISIDDEEAKQFRESVVEWLMTNHPHDCPVCEEGGNCHLQDMTVMTGHSFRRYRFTKRTHRNQDLGPFISHEMNRCIACYRCVRYYKDYADGTDLGVYGAHDNVYFGRPEDGTLESEFSGNLVEICPTGVFTDKTHSERYNRKWDMQFAPSICQQCSIGCNISPGERYGELRRIENRYNGTVNHYFLCDRGRFGYGYVNLKDRPRQPVQRRGDDFITLNAEQAMQGAADILRQSKKVIGIGSPRASVESNFALRELVGEENFYTGIAHGEQERLQLALKVLREGGIYTPALREIESYDAVLVLGEDVTQTGARVALAVRQAVKGKAREMAAAQKVADWQIAAILNIGQRAKHPLFVTNVDDTRLDDIAAWTYRAPVEDQARLGFAIAHALDNSAPAVDGIEPELQSKIDVIVQALAGAKKPLIISGTNTGSAEVIQAAANVAKALKGRGADVGITMIARSVNSMGLGIMGGGSLEEALTELETGRADAVVVLENDLHRHASATRVNAALAKAPLVMVVDHQRTAIMENAHLVLSAASFAESDGTVINNEGRAQRFFQVYDPAYYDSQTVMLESWRWLHSLHSTLLSREVDWTQLDHVIDAVVAKIPELAGIKDAAPDATFRIRGQKLAREPHRYSGRTAMRANISVHEPRQPQDIDTMFTFSMEGNNQPTAHRSQVPFAWAPGWNSPQAWNKFQDEVGGKLRFGDPGVRLFETSENSLDYFTSVPARFQPQDGKWRIAPYYHLFGSDELSQRAPVFQSRMPQPYIKLNPADAAKLGVNAGTRVSFSYDGNMVTLPVEISEGLTAGQVGLPMGMSGIAPVLAGAHLEDLKEAQQ</sequence>
<organism>
    <name type="scientific">Escherichia coli O6:H1 (strain CFT073 / ATCC 700928 / UPEC)</name>
    <dbReference type="NCBI Taxonomy" id="199310"/>
    <lineage>
        <taxon>Bacteria</taxon>
        <taxon>Pseudomonadati</taxon>
        <taxon>Pseudomonadota</taxon>
        <taxon>Gammaproteobacteria</taxon>
        <taxon>Enterobacterales</taxon>
        <taxon>Enterobacteriaceae</taxon>
        <taxon>Escherichia</taxon>
    </lineage>
</organism>
<gene>
    <name type="primary">nuoG</name>
    <name type="ordered locus">c2824</name>
</gene>
<evidence type="ECO:0000250" key="1"/>
<evidence type="ECO:0000255" key="2"/>
<evidence type="ECO:0000255" key="3">
    <source>
        <dbReference type="PROSITE-ProRule" id="PRU00465"/>
    </source>
</evidence>
<evidence type="ECO:0000255" key="4">
    <source>
        <dbReference type="PROSITE-ProRule" id="PRU01004"/>
    </source>
</evidence>
<evidence type="ECO:0000255" key="5">
    <source>
        <dbReference type="PROSITE-ProRule" id="PRU01184"/>
    </source>
</evidence>
<evidence type="ECO:0000305" key="6"/>
<protein>
    <recommendedName>
        <fullName>NADH-quinone oxidoreductase subunit G</fullName>
        <ecNumber>7.1.1.-</ecNumber>
    </recommendedName>
    <alternativeName>
        <fullName>NADH dehydrogenase I subunit G</fullName>
    </alternativeName>
    <alternativeName>
        <fullName>NDH-1 subunit G</fullName>
    </alternativeName>
    <alternativeName>
        <fullName>NUO7</fullName>
    </alternativeName>
</protein>
<reference key="1">
    <citation type="journal article" date="2002" name="Proc. Natl. Acad. Sci. U.S.A.">
        <title>Extensive mosaic structure revealed by the complete genome sequence of uropathogenic Escherichia coli.</title>
        <authorList>
            <person name="Welch R.A."/>
            <person name="Burland V."/>
            <person name="Plunkett G. III"/>
            <person name="Redford P."/>
            <person name="Roesch P."/>
            <person name="Rasko D."/>
            <person name="Buckles E.L."/>
            <person name="Liou S.-R."/>
            <person name="Boutin A."/>
            <person name="Hackett J."/>
            <person name="Stroud D."/>
            <person name="Mayhew G.F."/>
            <person name="Rose D.J."/>
            <person name="Zhou S."/>
            <person name="Schwartz D.C."/>
            <person name="Perna N.T."/>
            <person name="Mobley H.L.T."/>
            <person name="Donnenberg M.S."/>
            <person name="Blattner F.R."/>
        </authorList>
    </citation>
    <scope>NUCLEOTIDE SEQUENCE [LARGE SCALE GENOMIC DNA]</scope>
    <source>
        <strain>CFT073 / ATCC 700928 / UPEC</strain>
    </source>
</reference>
<comment type="function">
    <text evidence="1">NDH-1 shuttles electrons from NADH, via FMN and iron-sulfur (Fe-S) centers, to quinones in the respiratory chain. The immediate electron acceptor for the enzyme in this species is believed to be ubiquinone. Couples the redox reaction to proton translocation (for every two electrons transferred, four hydrogen ions are translocated across the cytoplasmic membrane), and thus conserves the redox energy in a proton gradient (By similarity).</text>
</comment>
<comment type="catalytic activity">
    <reaction>
        <text>a quinone + NADH + 5 H(+)(in) = a quinol + NAD(+) + 4 H(+)(out)</text>
        <dbReference type="Rhea" id="RHEA:57888"/>
        <dbReference type="ChEBI" id="CHEBI:15378"/>
        <dbReference type="ChEBI" id="CHEBI:24646"/>
        <dbReference type="ChEBI" id="CHEBI:57540"/>
        <dbReference type="ChEBI" id="CHEBI:57945"/>
        <dbReference type="ChEBI" id="CHEBI:132124"/>
    </reaction>
</comment>
<comment type="cofactor">
    <cofactor evidence="1">
        <name>[2Fe-2S] cluster</name>
        <dbReference type="ChEBI" id="CHEBI:190135"/>
    </cofactor>
    <text evidence="1">Binds 1 [2Fe-2S] cluster per subunit.</text>
</comment>
<comment type="cofactor">
    <cofactor evidence="1">
        <name>[4Fe-4S] cluster</name>
        <dbReference type="ChEBI" id="CHEBI:49883"/>
    </cofactor>
    <text evidence="1">Binds 3 [4Fe-4S] clusters per subunit.</text>
</comment>
<comment type="subunit">
    <text>Composed of 13 different subunits. Subunits NuoCD, E, F, and G constitute the peripheral sector of the complex.</text>
</comment>
<comment type="similarity">
    <text evidence="6">Belongs to the complex I 75 kDa subunit family.</text>
</comment>
<comment type="sequence caution" evidence="6">
    <conflict type="erroneous initiation">
        <sequence resource="EMBL-CDS" id="AAN81278"/>
    </conflict>
</comment>
<name>NUOG_ECOL6</name>
<proteinExistence type="inferred from homology"/>
<accession>Q8FFJ9</accession>
<feature type="initiator methionine" description="Removed" evidence="1">
    <location>
        <position position="1"/>
    </location>
</feature>
<feature type="chain" id="PRO_0000118548" description="NADH-quinone oxidoreductase subunit G">
    <location>
        <begin position="2"/>
        <end position="908"/>
    </location>
</feature>
<feature type="domain" description="2Fe-2S ferredoxin-type" evidence="3">
    <location>
        <begin position="2"/>
        <end position="83"/>
    </location>
</feature>
<feature type="domain" description="4Fe-4S His(Cys)3-ligated-type" evidence="5">
    <location>
        <begin position="83"/>
        <end position="122"/>
    </location>
</feature>
<feature type="domain" description="4Fe-4S Mo/W bis-MGD-type" evidence="4">
    <location>
        <begin position="221"/>
        <end position="277"/>
    </location>
</feature>
<feature type="binding site" evidence="1">
    <location>
        <position position="34"/>
    </location>
    <ligand>
        <name>[2Fe-2S] cluster</name>
        <dbReference type="ChEBI" id="CHEBI:190135"/>
    </ligand>
</feature>
<feature type="binding site" evidence="1">
    <location>
        <position position="45"/>
    </location>
    <ligand>
        <name>[2Fe-2S] cluster</name>
        <dbReference type="ChEBI" id="CHEBI:190135"/>
    </ligand>
</feature>
<feature type="binding site" evidence="1">
    <location>
        <position position="48"/>
    </location>
    <ligand>
        <name>[2Fe-2S] cluster</name>
        <dbReference type="ChEBI" id="CHEBI:190135"/>
    </ligand>
</feature>
<feature type="binding site" evidence="1">
    <location>
        <position position="67"/>
    </location>
    <ligand>
        <name>[2Fe-2S] cluster</name>
        <dbReference type="ChEBI" id="CHEBI:190135"/>
    </ligand>
</feature>
<feature type="binding site" evidence="5">
    <location>
        <position position="99"/>
    </location>
    <ligand>
        <name>[4Fe-4S] cluster</name>
        <dbReference type="ChEBI" id="CHEBI:49883"/>
        <label>1</label>
    </ligand>
</feature>
<feature type="binding site" evidence="5">
    <location>
        <position position="103"/>
    </location>
    <ligand>
        <name>[4Fe-4S] cluster</name>
        <dbReference type="ChEBI" id="CHEBI:49883"/>
        <label>1</label>
    </ligand>
</feature>
<feature type="binding site" evidence="5">
    <location>
        <position position="106"/>
    </location>
    <ligand>
        <name>[4Fe-4S] cluster</name>
        <dbReference type="ChEBI" id="CHEBI:49883"/>
        <label>1</label>
    </ligand>
</feature>
<feature type="binding site" evidence="5">
    <location>
        <position position="112"/>
    </location>
    <ligand>
        <name>[4Fe-4S] cluster</name>
        <dbReference type="ChEBI" id="CHEBI:49883"/>
        <label>1</label>
    </ligand>
</feature>
<feature type="binding site" evidence="1">
    <location>
        <position position="151"/>
    </location>
    <ligand>
        <name>[4Fe-4S] cluster</name>
        <dbReference type="ChEBI" id="CHEBI:49883"/>
        <label>2</label>
    </ligand>
</feature>
<feature type="binding site" evidence="1">
    <location>
        <position position="154"/>
    </location>
    <ligand>
        <name>[4Fe-4S] cluster</name>
        <dbReference type="ChEBI" id="CHEBI:49883"/>
        <label>2</label>
    </ligand>
</feature>
<feature type="binding site" evidence="1">
    <location>
        <position position="157"/>
    </location>
    <ligand>
        <name>[4Fe-4S] cluster</name>
        <dbReference type="ChEBI" id="CHEBI:49883"/>
        <label>2</label>
    </ligand>
</feature>
<feature type="binding site" evidence="1">
    <location>
        <position position="201"/>
    </location>
    <ligand>
        <name>[4Fe-4S] cluster</name>
        <dbReference type="ChEBI" id="CHEBI:49883"/>
        <label>2</label>
    </ligand>
</feature>
<feature type="binding site" evidence="2">
    <location>
        <position position="228"/>
    </location>
    <ligand>
        <name>[4Fe-4S] cluster</name>
        <dbReference type="ChEBI" id="CHEBI:49883"/>
        <label>3</label>
    </ligand>
</feature>
<feature type="binding site" evidence="2">
    <location>
        <position position="231"/>
    </location>
    <ligand>
        <name>[4Fe-4S] cluster</name>
        <dbReference type="ChEBI" id="CHEBI:49883"/>
        <label>3</label>
    </ligand>
</feature>
<feature type="binding site" evidence="2">
    <location>
        <position position="235"/>
    </location>
    <ligand>
        <name>[4Fe-4S] cluster</name>
        <dbReference type="ChEBI" id="CHEBI:49883"/>
        <label>3</label>
    </ligand>
</feature>
<feature type="binding site" evidence="2">
    <location>
        <position position="263"/>
    </location>
    <ligand>
        <name>[4Fe-4S] cluster</name>
        <dbReference type="ChEBI" id="CHEBI:49883"/>
        <label>3</label>
    </ligand>
</feature>
<dbReference type="EC" id="7.1.1.-"/>
<dbReference type="EMBL" id="AE014075">
    <property type="protein sequence ID" value="AAN81278.1"/>
    <property type="status" value="ALT_INIT"/>
    <property type="molecule type" value="Genomic_DNA"/>
</dbReference>
<dbReference type="RefSeq" id="WP_024182245.1">
    <property type="nucleotide sequence ID" value="NC_004431.1"/>
</dbReference>
<dbReference type="SMR" id="Q8FFJ9"/>
<dbReference type="STRING" id="199310.c2824"/>
<dbReference type="DNASU" id="1038363"/>
<dbReference type="KEGG" id="ecc:c2824"/>
<dbReference type="eggNOG" id="COG1034">
    <property type="taxonomic scope" value="Bacteria"/>
</dbReference>
<dbReference type="HOGENOM" id="CLU_000422_11_4_6"/>
<dbReference type="Proteomes" id="UP000001410">
    <property type="component" value="Chromosome"/>
</dbReference>
<dbReference type="GO" id="GO:0016020">
    <property type="term" value="C:membrane"/>
    <property type="evidence" value="ECO:0007669"/>
    <property type="project" value="InterPro"/>
</dbReference>
<dbReference type="GO" id="GO:1990204">
    <property type="term" value="C:oxidoreductase complex"/>
    <property type="evidence" value="ECO:0007669"/>
    <property type="project" value="UniProtKB-ARBA"/>
</dbReference>
<dbReference type="GO" id="GO:0051537">
    <property type="term" value="F:2 iron, 2 sulfur cluster binding"/>
    <property type="evidence" value="ECO:0007669"/>
    <property type="project" value="UniProtKB-KW"/>
</dbReference>
<dbReference type="GO" id="GO:0051539">
    <property type="term" value="F:4 iron, 4 sulfur cluster binding"/>
    <property type="evidence" value="ECO:0007669"/>
    <property type="project" value="UniProtKB-KW"/>
</dbReference>
<dbReference type="GO" id="GO:0046872">
    <property type="term" value="F:metal ion binding"/>
    <property type="evidence" value="ECO:0007669"/>
    <property type="project" value="UniProtKB-KW"/>
</dbReference>
<dbReference type="GO" id="GO:0043546">
    <property type="term" value="F:molybdopterin cofactor binding"/>
    <property type="evidence" value="ECO:0007669"/>
    <property type="project" value="InterPro"/>
</dbReference>
<dbReference type="GO" id="GO:0008137">
    <property type="term" value="F:NADH dehydrogenase (ubiquinone) activity"/>
    <property type="evidence" value="ECO:0007669"/>
    <property type="project" value="InterPro"/>
</dbReference>
<dbReference type="GO" id="GO:0048038">
    <property type="term" value="F:quinone binding"/>
    <property type="evidence" value="ECO:0007669"/>
    <property type="project" value="UniProtKB-KW"/>
</dbReference>
<dbReference type="GO" id="GO:0042773">
    <property type="term" value="P:ATP synthesis coupled electron transport"/>
    <property type="evidence" value="ECO:0007669"/>
    <property type="project" value="InterPro"/>
</dbReference>
<dbReference type="CDD" id="cd00207">
    <property type="entry name" value="fer2"/>
    <property type="match status" value="1"/>
</dbReference>
<dbReference type="CDD" id="cd02788">
    <property type="entry name" value="MopB_CT_NDH-1_NuoG2-N7"/>
    <property type="match status" value="1"/>
</dbReference>
<dbReference type="CDD" id="cd02771">
    <property type="entry name" value="MopB_NDH-1_NuoG2-N7"/>
    <property type="match status" value="1"/>
</dbReference>
<dbReference type="FunFam" id="2.20.25.90:FF:000003">
    <property type="entry name" value="NADH-quinone oxidoreductase"/>
    <property type="match status" value="1"/>
</dbReference>
<dbReference type="FunFam" id="2.40.40.20:FF:000014">
    <property type="entry name" value="NADH-quinone oxidoreductase"/>
    <property type="match status" value="1"/>
</dbReference>
<dbReference type="FunFam" id="3.10.20.740:FF:000002">
    <property type="entry name" value="NADH-quinone oxidoreductase"/>
    <property type="match status" value="1"/>
</dbReference>
<dbReference type="FunFam" id="3.30.200.210:FF:000004">
    <property type="entry name" value="NADH-quinone oxidoreductase"/>
    <property type="match status" value="1"/>
</dbReference>
<dbReference type="FunFam" id="3.40.50.740:FF:000006">
    <property type="entry name" value="NADH-quinone oxidoreductase"/>
    <property type="match status" value="1"/>
</dbReference>
<dbReference type="Gene3D" id="2.40.40.20">
    <property type="match status" value="1"/>
</dbReference>
<dbReference type="Gene3D" id="3.10.20.740">
    <property type="match status" value="1"/>
</dbReference>
<dbReference type="Gene3D" id="3.30.200.210">
    <property type="match status" value="1"/>
</dbReference>
<dbReference type="Gene3D" id="3.40.50.740">
    <property type="match status" value="1"/>
</dbReference>
<dbReference type="InterPro" id="IPR036010">
    <property type="entry name" value="2Fe-2S_ferredoxin-like_sf"/>
</dbReference>
<dbReference type="InterPro" id="IPR001041">
    <property type="entry name" value="2Fe-2S_ferredoxin-type"/>
</dbReference>
<dbReference type="InterPro" id="IPR009010">
    <property type="entry name" value="Asp_de-COase-like_dom_sf"/>
</dbReference>
<dbReference type="InterPro" id="IPR006657">
    <property type="entry name" value="MoPterin_dinucl-bd_dom"/>
</dbReference>
<dbReference type="InterPro" id="IPR006656">
    <property type="entry name" value="Mopterin_OxRdtase"/>
</dbReference>
<dbReference type="InterPro" id="IPR006963">
    <property type="entry name" value="Mopterin_OxRdtase_4Fe-4S_dom"/>
</dbReference>
<dbReference type="InterPro" id="IPR000283">
    <property type="entry name" value="NADH_UbQ_OxRdtase_75kDa_su_CS"/>
</dbReference>
<dbReference type="InterPro" id="IPR054351">
    <property type="entry name" value="NADH_UbQ_OxRdtase_ferredoxin"/>
</dbReference>
<dbReference type="InterPro" id="IPR010228">
    <property type="entry name" value="NADH_UbQ_OxRdtase_Gsu"/>
</dbReference>
<dbReference type="InterPro" id="IPR019574">
    <property type="entry name" value="NADH_UbQ_OxRdtase_Gsu_4Fe4S-bd"/>
</dbReference>
<dbReference type="InterPro" id="IPR050123">
    <property type="entry name" value="Prok_molybdopt-oxidoreductase"/>
</dbReference>
<dbReference type="NCBIfam" id="TIGR01973">
    <property type="entry name" value="NuoG"/>
    <property type="match status" value="1"/>
</dbReference>
<dbReference type="PANTHER" id="PTHR43105:SF10">
    <property type="entry name" value="NADH-QUINONE OXIDOREDUCTASE SUBUNIT G"/>
    <property type="match status" value="1"/>
</dbReference>
<dbReference type="PANTHER" id="PTHR43105">
    <property type="entry name" value="RESPIRATORY NITRATE REDUCTASE"/>
    <property type="match status" value="1"/>
</dbReference>
<dbReference type="Pfam" id="PF13510">
    <property type="entry name" value="Fer2_4"/>
    <property type="match status" value="1"/>
</dbReference>
<dbReference type="Pfam" id="PF22117">
    <property type="entry name" value="Fer4_Nqo3"/>
    <property type="match status" value="1"/>
</dbReference>
<dbReference type="Pfam" id="PF04879">
    <property type="entry name" value="Molybdop_Fe4S4"/>
    <property type="match status" value="1"/>
</dbReference>
<dbReference type="Pfam" id="PF00384">
    <property type="entry name" value="Molybdopterin"/>
    <property type="match status" value="1"/>
</dbReference>
<dbReference type="Pfam" id="PF01568">
    <property type="entry name" value="Molydop_binding"/>
    <property type="match status" value="1"/>
</dbReference>
<dbReference type="Pfam" id="PF10588">
    <property type="entry name" value="NADH-G_4Fe-4S_3"/>
    <property type="match status" value="1"/>
</dbReference>
<dbReference type="SMART" id="SM00926">
    <property type="entry name" value="Molybdop_Fe4S4"/>
    <property type="match status" value="1"/>
</dbReference>
<dbReference type="SMART" id="SM00929">
    <property type="entry name" value="NADH-G_4Fe-4S_3"/>
    <property type="match status" value="1"/>
</dbReference>
<dbReference type="SUPFAM" id="SSF54292">
    <property type="entry name" value="2Fe-2S ferredoxin-like"/>
    <property type="match status" value="1"/>
</dbReference>
<dbReference type="SUPFAM" id="SSF54862">
    <property type="entry name" value="4Fe-4S ferredoxins"/>
    <property type="match status" value="1"/>
</dbReference>
<dbReference type="SUPFAM" id="SSF50692">
    <property type="entry name" value="ADC-like"/>
    <property type="match status" value="1"/>
</dbReference>
<dbReference type="SUPFAM" id="SSF53706">
    <property type="entry name" value="Formate dehydrogenase/DMSO reductase, domains 1-3"/>
    <property type="match status" value="1"/>
</dbReference>
<dbReference type="PROSITE" id="PS51085">
    <property type="entry name" value="2FE2S_FER_2"/>
    <property type="match status" value="1"/>
</dbReference>
<dbReference type="PROSITE" id="PS51839">
    <property type="entry name" value="4FE4S_HC3"/>
    <property type="match status" value="1"/>
</dbReference>
<dbReference type="PROSITE" id="PS51669">
    <property type="entry name" value="4FE4S_MOW_BIS_MGD"/>
    <property type="match status" value="1"/>
</dbReference>
<dbReference type="PROSITE" id="PS00641">
    <property type="entry name" value="COMPLEX1_75K_1"/>
    <property type="match status" value="1"/>
</dbReference>
<dbReference type="PROSITE" id="PS00642">
    <property type="entry name" value="COMPLEX1_75K_2"/>
    <property type="match status" value="1"/>
</dbReference>
<dbReference type="PROSITE" id="PS00643">
    <property type="entry name" value="COMPLEX1_75K_3"/>
    <property type="match status" value="1"/>
</dbReference>
<keyword id="KW-0001">2Fe-2S</keyword>
<keyword id="KW-0004">4Fe-4S</keyword>
<keyword id="KW-0408">Iron</keyword>
<keyword id="KW-0411">Iron-sulfur</keyword>
<keyword id="KW-0479">Metal-binding</keyword>
<keyword id="KW-0520">NAD</keyword>
<keyword id="KW-0874">Quinone</keyword>
<keyword id="KW-1185">Reference proteome</keyword>
<keyword id="KW-1278">Translocase</keyword>
<keyword id="KW-0830">Ubiquinone</keyword>